<sequence length="56" mass="6442">MASKGGREKIKLVSTAETGHFYTTTKNKKTMPEKMSIIKFDPKARKHVEYKEAKLK</sequence>
<accession>B9MEB8</accession>
<evidence type="ECO:0000255" key="1">
    <source>
        <dbReference type="HAMAP-Rule" id="MF_00294"/>
    </source>
</evidence>
<evidence type="ECO:0000305" key="2"/>
<organism>
    <name type="scientific">Acidovorax ebreus (strain TPSY)</name>
    <name type="common">Diaphorobacter sp. (strain TPSY)</name>
    <dbReference type="NCBI Taxonomy" id="535289"/>
    <lineage>
        <taxon>Bacteria</taxon>
        <taxon>Pseudomonadati</taxon>
        <taxon>Pseudomonadota</taxon>
        <taxon>Betaproteobacteria</taxon>
        <taxon>Burkholderiales</taxon>
        <taxon>Comamonadaceae</taxon>
        <taxon>Diaphorobacter</taxon>
    </lineage>
</organism>
<proteinExistence type="inferred from homology"/>
<keyword id="KW-1185">Reference proteome</keyword>
<keyword id="KW-0687">Ribonucleoprotein</keyword>
<keyword id="KW-0689">Ribosomal protein</keyword>
<dbReference type="EMBL" id="CP001392">
    <property type="protein sequence ID" value="ACM34157.1"/>
    <property type="molecule type" value="Genomic_DNA"/>
</dbReference>
<dbReference type="RefSeq" id="WP_011806495.1">
    <property type="nucleotide sequence ID" value="NC_011992.1"/>
</dbReference>
<dbReference type="SMR" id="B9MEB8"/>
<dbReference type="GeneID" id="84680518"/>
<dbReference type="KEGG" id="dia:Dtpsy_2723"/>
<dbReference type="eggNOG" id="COG0267">
    <property type="taxonomic scope" value="Bacteria"/>
</dbReference>
<dbReference type="HOGENOM" id="CLU_190949_1_1_4"/>
<dbReference type="Proteomes" id="UP000000450">
    <property type="component" value="Chromosome"/>
</dbReference>
<dbReference type="GO" id="GO:0022625">
    <property type="term" value="C:cytosolic large ribosomal subunit"/>
    <property type="evidence" value="ECO:0007669"/>
    <property type="project" value="TreeGrafter"/>
</dbReference>
<dbReference type="GO" id="GO:0003735">
    <property type="term" value="F:structural constituent of ribosome"/>
    <property type="evidence" value="ECO:0007669"/>
    <property type="project" value="InterPro"/>
</dbReference>
<dbReference type="GO" id="GO:0006412">
    <property type="term" value="P:translation"/>
    <property type="evidence" value="ECO:0007669"/>
    <property type="project" value="UniProtKB-UniRule"/>
</dbReference>
<dbReference type="Gene3D" id="2.20.28.120">
    <property type="entry name" value="Ribosomal protein L33"/>
    <property type="match status" value="1"/>
</dbReference>
<dbReference type="HAMAP" id="MF_00294">
    <property type="entry name" value="Ribosomal_bL33"/>
    <property type="match status" value="1"/>
</dbReference>
<dbReference type="InterPro" id="IPR001705">
    <property type="entry name" value="Ribosomal_bL33"/>
</dbReference>
<dbReference type="InterPro" id="IPR018264">
    <property type="entry name" value="Ribosomal_bL33_CS"/>
</dbReference>
<dbReference type="InterPro" id="IPR038584">
    <property type="entry name" value="Ribosomal_bL33_sf"/>
</dbReference>
<dbReference type="InterPro" id="IPR011332">
    <property type="entry name" value="Ribosomal_zn-bd"/>
</dbReference>
<dbReference type="NCBIfam" id="NF001860">
    <property type="entry name" value="PRK00595.1"/>
    <property type="match status" value="1"/>
</dbReference>
<dbReference type="NCBIfam" id="TIGR01023">
    <property type="entry name" value="rpmG_bact"/>
    <property type="match status" value="1"/>
</dbReference>
<dbReference type="PANTHER" id="PTHR15238">
    <property type="entry name" value="54S RIBOSOMAL PROTEIN L39, MITOCHONDRIAL"/>
    <property type="match status" value="1"/>
</dbReference>
<dbReference type="PANTHER" id="PTHR15238:SF1">
    <property type="entry name" value="LARGE RIBOSOMAL SUBUNIT PROTEIN BL33M"/>
    <property type="match status" value="1"/>
</dbReference>
<dbReference type="Pfam" id="PF00471">
    <property type="entry name" value="Ribosomal_L33"/>
    <property type="match status" value="1"/>
</dbReference>
<dbReference type="SUPFAM" id="SSF57829">
    <property type="entry name" value="Zn-binding ribosomal proteins"/>
    <property type="match status" value="1"/>
</dbReference>
<dbReference type="PROSITE" id="PS00582">
    <property type="entry name" value="RIBOSOMAL_L33"/>
    <property type="match status" value="1"/>
</dbReference>
<gene>
    <name evidence="1" type="primary">rpmG</name>
    <name type="ordered locus">Dtpsy_2723</name>
</gene>
<name>RL33_ACIET</name>
<reference key="1">
    <citation type="submission" date="2009-01" db="EMBL/GenBank/DDBJ databases">
        <title>Complete sequence of Diaphorobacter sp. TPSY.</title>
        <authorList>
            <consortium name="US DOE Joint Genome Institute"/>
            <person name="Lucas S."/>
            <person name="Copeland A."/>
            <person name="Lapidus A."/>
            <person name="Glavina del Rio T."/>
            <person name="Tice H."/>
            <person name="Bruce D."/>
            <person name="Goodwin L."/>
            <person name="Pitluck S."/>
            <person name="Chertkov O."/>
            <person name="Brettin T."/>
            <person name="Detter J.C."/>
            <person name="Han C."/>
            <person name="Larimer F."/>
            <person name="Land M."/>
            <person name="Hauser L."/>
            <person name="Kyrpides N."/>
            <person name="Mikhailova N."/>
            <person name="Coates J.D."/>
        </authorList>
    </citation>
    <scope>NUCLEOTIDE SEQUENCE [LARGE SCALE GENOMIC DNA]</scope>
    <source>
        <strain>TPSY</strain>
    </source>
</reference>
<protein>
    <recommendedName>
        <fullName evidence="1">Large ribosomal subunit protein bL33</fullName>
    </recommendedName>
    <alternativeName>
        <fullName evidence="2">50S ribosomal protein L33</fullName>
    </alternativeName>
</protein>
<comment type="similarity">
    <text evidence="1">Belongs to the bacterial ribosomal protein bL33 family.</text>
</comment>
<feature type="chain" id="PRO_1000194053" description="Large ribosomal subunit protein bL33">
    <location>
        <begin position="1"/>
        <end position="56"/>
    </location>
</feature>